<comment type="catalytic activity">
    <reaction>
        <text>GTP + H2O = 7,8-dihydroneopterin 3'-triphosphate + formate + H(+)</text>
        <dbReference type="Rhea" id="RHEA:17473"/>
        <dbReference type="ChEBI" id="CHEBI:15377"/>
        <dbReference type="ChEBI" id="CHEBI:15378"/>
        <dbReference type="ChEBI" id="CHEBI:15740"/>
        <dbReference type="ChEBI" id="CHEBI:37565"/>
        <dbReference type="ChEBI" id="CHEBI:58462"/>
        <dbReference type="EC" id="3.5.4.16"/>
    </reaction>
</comment>
<comment type="pathway">
    <text>Cofactor biosynthesis; 7,8-dihydroneopterin triphosphate biosynthesis; 7,8-dihydroneopterin triphosphate from GTP: step 1/1.</text>
</comment>
<comment type="subunit">
    <text evidence="1">Toroid-shaped homodecamer, composed of two pentamers of five dimers.</text>
</comment>
<comment type="similarity">
    <text evidence="2">Belongs to the GTP cyclohydrolase I family.</text>
</comment>
<organism>
    <name type="scientific">Streptococcus pyogenes</name>
    <dbReference type="NCBI Taxonomy" id="1314"/>
    <lineage>
        <taxon>Bacteria</taxon>
        <taxon>Bacillati</taxon>
        <taxon>Bacillota</taxon>
        <taxon>Bacilli</taxon>
        <taxon>Lactobacillales</taxon>
        <taxon>Streptococcaceae</taxon>
        <taxon>Streptococcus</taxon>
    </lineage>
</organism>
<keyword id="KW-0342">GTP-binding</keyword>
<keyword id="KW-0378">Hydrolase</keyword>
<keyword id="KW-0479">Metal-binding</keyword>
<keyword id="KW-0547">Nucleotide-binding</keyword>
<keyword id="KW-0554">One-carbon metabolism</keyword>
<keyword id="KW-0862">Zinc</keyword>
<protein>
    <recommendedName>
        <fullName>GTP cyclohydrolase 1</fullName>
        <ecNumber>3.5.4.16</ecNumber>
    </recommendedName>
    <alternativeName>
        <fullName>GTP cyclohydrolase I</fullName>
        <shortName>GTP-CH-I</shortName>
    </alternativeName>
</protein>
<sequence>MKRERLMSINKEKAEAAIYQFLEAIGENPNREGLLDTPKRVAKMYAEMFAGLKKDPKEEFTAVFTEHHEDVVIVKDISFYSMCEHHQVPFYGKAHIAYLPSDGRVTGLSKLARAVEVASKRPQLQERLTAQIADALVEALHPTGVLVLVEAEHMCMTMRGIKKPGSKTITTTARGLYKEDRSERQEVMALMTKV</sequence>
<accession>P0C0C1</accession>
<accession>O33723</accession>
<accession>P0A3E8</accession>
<accession>Q8P153</accession>
<reference key="1">
    <citation type="journal article" date="1998" name="Antimicrob. Agents Chemother.">
        <title>Sulfonamide resistance in Streptococcus pyogenes is associated with differences in the amino acid sequence of its chromosomal dihydropteroate synthase.</title>
        <authorList>
            <person name="Swedberg G."/>
            <person name="Ringertz S."/>
            <person name="Skoeld O."/>
        </authorList>
    </citation>
    <scope>NUCLEOTIDE SEQUENCE [GENOMIC DNA]</scope>
    <source>
        <strain>G56</strain>
    </source>
</reference>
<gene>
    <name type="primary">folE</name>
</gene>
<feature type="chain" id="PRO_0000119451" description="GTP cyclohydrolase 1">
    <location>
        <begin position="1"/>
        <end position="194"/>
    </location>
</feature>
<feature type="binding site" evidence="1">
    <location>
        <position position="83"/>
    </location>
    <ligand>
        <name>Zn(2+)</name>
        <dbReference type="ChEBI" id="CHEBI:29105"/>
    </ligand>
</feature>
<feature type="binding site" evidence="1">
    <location>
        <position position="86"/>
    </location>
    <ligand>
        <name>Zn(2+)</name>
        <dbReference type="ChEBI" id="CHEBI:29105"/>
    </ligand>
</feature>
<feature type="binding site" evidence="1">
    <location>
        <position position="155"/>
    </location>
    <ligand>
        <name>Zn(2+)</name>
        <dbReference type="ChEBI" id="CHEBI:29105"/>
    </ligand>
</feature>
<dbReference type="EC" id="3.5.4.16"/>
<dbReference type="EMBL" id="AJ000685">
    <property type="protein sequence ID" value="CAA04237.1"/>
    <property type="molecule type" value="Genomic_DNA"/>
</dbReference>
<dbReference type="SMR" id="P0C0C1"/>
<dbReference type="STRING" id="1314.SD89_04120"/>
<dbReference type="eggNOG" id="COG0302">
    <property type="taxonomic scope" value="Bacteria"/>
</dbReference>
<dbReference type="UniPathway" id="UPA00848">
    <property type="reaction ID" value="UER00151"/>
</dbReference>
<dbReference type="GO" id="GO:0005737">
    <property type="term" value="C:cytoplasm"/>
    <property type="evidence" value="ECO:0007669"/>
    <property type="project" value="TreeGrafter"/>
</dbReference>
<dbReference type="GO" id="GO:0005525">
    <property type="term" value="F:GTP binding"/>
    <property type="evidence" value="ECO:0007669"/>
    <property type="project" value="UniProtKB-KW"/>
</dbReference>
<dbReference type="GO" id="GO:0003934">
    <property type="term" value="F:GTP cyclohydrolase I activity"/>
    <property type="evidence" value="ECO:0007669"/>
    <property type="project" value="UniProtKB-UniRule"/>
</dbReference>
<dbReference type="GO" id="GO:0008270">
    <property type="term" value="F:zinc ion binding"/>
    <property type="evidence" value="ECO:0007669"/>
    <property type="project" value="UniProtKB-UniRule"/>
</dbReference>
<dbReference type="GO" id="GO:0006730">
    <property type="term" value="P:one-carbon metabolic process"/>
    <property type="evidence" value="ECO:0007669"/>
    <property type="project" value="UniProtKB-UniRule"/>
</dbReference>
<dbReference type="GO" id="GO:0006729">
    <property type="term" value="P:tetrahydrobiopterin biosynthetic process"/>
    <property type="evidence" value="ECO:0007669"/>
    <property type="project" value="TreeGrafter"/>
</dbReference>
<dbReference type="GO" id="GO:0046654">
    <property type="term" value="P:tetrahydrofolate biosynthetic process"/>
    <property type="evidence" value="ECO:0007669"/>
    <property type="project" value="UniProtKB-UniRule"/>
</dbReference>
<dbReference type="FunFam" id="1.10.286.10:FF:000001">
    <property type="entry name" value="GTP cyclohydrolase 1"/>
    <property type="match status" value="1"/>
</dbReference>
<dbReference type="FunFam" id="3.30.1130.10:FF:000001">
    <property type="entry name" value="GTP cyclohydrolase 1"/>
    <property type="match status" value="1"/>
</dbReference>
<dbReference type="Gene3D" id="1.10.286.10">
    <property type="match status" value="1"/>
</dbReference>
<dbReference type="Gene3D" id="3.30.1130.10">
    <property type="match status" value="1"/>
</dbReference>
<dbReference type="HAMAP" id="MF_00223">
    <property type="entry name" value="FolE"/>
    <property type="match status" value="1"/>
</dbReference>
<dbReference type="InterPro" id="IPR043133">
    <property type="entry name" value="GTP-CH-I_C/QueF"/>
</dbReference>
<dbReference type="InterPro" id="IPR043134">
    <property type="entry name" value="GTP-CH-I_N"/>
</dbReference>
<dbReference type="InterPro" id="IPR001474">
    <property type="entry name" value="GTP_CycHdrlase_I"/>
</dbReference>
<dbReference type="InterPro" id="IPR018234">
    <property type="entry name" value="GTP_CycHdrlase_I_CS"/>
</dbReference>
<dbReference type="InterPro" id="IPR020602">
    <property type="entry name" value="GTP_CycHdrlase_I_dom"/>
</dbReference>
<dbReference type="NCBIfam" id="TIGR00063">
    <property type="entry name" value="folE"/>
    <property type="match status" value="1"/>
</dbReference>
<dbReference type="NCBIfam" id="NF006825">
    <property type="entry name" value="PRK09347.1-2"/>
    <property type="match status" value="1"/>
</dbReference>
<dbReference type="NCBIfam" id="NF006826">
    <property type="entry name" value="PRK09347.1-3"/>
    <property type="match status" value="1"/>
</dbReference>
<dbReference type="PANTHER" id="PTHR11109:SF7">
    <property type="entry name" value="GTP CYCLOHYDROLASE 1"/>
    <property type="match status" value="1"/>
</dbReference>
<dbReference type="PANTHER" id="PTHR11109">
    <property type="entry name" value="GTP CYCLOHYDROLASE I"/>
    <property type="match status" value="1"/>
</dbReference>
<dbReference type="Pfam" id="PF01227">
    <property type="entry name" value="GTP_cyclohydroI"/>
    <property type="match status" value="1"/>
</dbReference>
<dbReference type="SUPFAM" id="SSF55620">
    <property type="entry name" value="Tetrahydrobiopterin biosynthesis enzymes-like"/>
    <property type="match status" value="1"/>
</dbReference>
<dbReference type="PROSITE" id="PS00859">
    <property type="entry name" value="GTP_CYCLOHYDROL_1_1"/>
    <property type="match status" value="1"/>
</dbReference>
<dbReference type="PROSITE" id="PS00860">
    <property type="entry name" value="GTP_CYCLOHYDROL_1_2"/>
    <property type="match status" value="1"/>
</dbReference>
<name>GCH1_STRPY</name>
<evidence type="ECO:0000250" key="1"/>
<evidence type="ECO:0000305" key="2"/>
<proteinExistence type="inferred from homology"/>